<comment type="function">
    <text evidence="2 5">Common subunit for the receptors for a variety of interleukins (PubMed:7718508). Probably in association with IL15RA, involved in the stimulation of neutrophil phagocytosis by IL15 (By similarity).</text>
</comment>
<comment type="subunit">
    <text evidence="1">The gamma subunit is common to the IL2, IL4, IL7, IL15, IL21 and probably also the IL13 receptors. Interacts with SHB upon interleukin stimulation (By similarity). Interacts with IL9 (PubMed:7718508).</text>
</comment>
<comment type="subcellular location">
    <subcellularLocation>
        <location evidence="2">Cell membrane</location>
        <topology evidence="3">Single-pass type I membrane protein</topology>
    </subcellularLocation>
    <subcellularLocation>
        <location evidence="2">Cell surface</location>
    </subcellularLocation>
</comment>
<comment type="domain">
    <text>The WSXWS motif appears to be necessary for proper protein folding and thereby efficient intracellular transport and cell-surface receptor binding.</text>
</comment>
<comment type="domain">
    <text>The box 1 motif is required for JAK interaction and/or activation.</text>
</comment>
<comment type="similarity">
    <text evidence="6">Belongs to the type I cytokine receptor family. Type 5 subfamily.</text>
</comment>
<evidence type="ECO:0000250" key="1"/>
<evidence type="ECO:0000250" key="2">
    <source>
        <dbReference type="UniProtKB" id="P31785"/>
    </source>
</evidence>
<evidence type="ECO:0000255" key="3"/>
<evidence type="ECO:0000255" key="4">
    <source>
        <dbReference type="PROSITE-ProRule" id="PRU00316"/>
    </source>
</evidence>
<evidence type="ECO:0000269" key="5">
    <source>
    </source>
</evidence>
<evidence type="ECO:0000305" key="6"/>
<evidence type="ECO:0007829" key="7">
    <source>
        <dbReference type="PDB" id="6DG5"/>
    </source>
</evidence>
<evidence type="ECO:0007829" key="8">
    <source>
        <dbReference type="PDB" id="8DDC"/>
    </source>
</evidence>
<gene>
    <name type="primary">Il2rg</name>
</gene>
<feature type="signal peptide" evidence="1">
    <location>
        <begin position="1"/>
        <end position="22"/>
    </location>
</feature>
<feature type="chain" id="PRO_0000010867" description="Cytokine receptor common subunit gamma">
    <location>
        <begin position="23"/>
        <end position="369"/>
    </location>
</feature>
<feature type="topological domain" description="Extracellular" evidence="3">
    <location>
        <begin position="23"/>
        <end position="263"/>
    </location>
</feature>
<feature type="transmembrane region" description="Helical" evidence="3">
    <location>
        <begin position="264"/>
        <end position="284"/>
    </location>
</feature>
<feature type="topological domain" description="Cytoplasmic" evidence="3">
    <location>
        <begin position="285"/>
        <end position="369"/>
    </location>
</feature>
<feature type="domain" description="Fibronectin type-III" evidence="4">
    <location>
        <begin position="156"/>
        <end position="254"/>
    </location>
</feature>
<feature type="short sequence motif" description="WSXWS motif">
    <location>
        <begin position="238"/>
        <end position="242"/>
    </location>
</feature>
<feature type="short sequence motif" description="Box 1 motif">
    <location>
        <begin position="286"/>
        <end position="294"/>
    </location>
</feature>
<feature type="glycosylation site" description="N-linked (GlcNAc...) asparagine" evidence="3">
    <location>
        <position position="71"/>
    </location>
</feature>
<feature type="glycosylation site" description="N-linked (GlcNAc...) asparagine" evidence="3">
    <location>
        <position position="75"/>
    </location>
</feature>
<feature type="glycosylation site" description="N-linked (GlcNAc...) asparagine" evidence="3">
    <location>
        <position position="84"/>
    </location>
</feature>
<feature type="glycosylation site" description="N-linked (GlcNAc...) asparagine" evidence="3">
    <location>
        <position position="96"/>
    </location>
</feature>
<feature type="glycosylation site" description="N-linked (GlcNAc...) asparagine" evidence="3">
    <location>
        <position position="159"/>
    </location>
</feature>
<feature type="glycosylation site" description="N-linked (GlcNAc...) asparagine" evidence="3">
    <location>
        <position position="164"/>
    </location>
</feature>
<feature type="disulfide bond" evidence="3">
    <location>
        <begin position="62"/>
        <end position="72"/>
    </location>
</feature>
<feature type="disulfide bond" evidence="3">
    <location>
        <begin position="102"/>
        <end position="115"/>
    </location>
</feature>
<feature type="strand" evidence="7">
    <location>
        <begin position="61"/>
        <end position="65"/>
    </location>
</feature>
<feature type="turn" evidence="7">
    <location>
        <begin position="66"/>
        <end position="68"/>
    </location>
</feature>
<feature type="strand" evidence="7">
    <location>
        <begin position="69"/>
        <end position="73"/>
    </location>
</feature>
<feature type="helix" evidence="7">
    <location>
        <begin position="76"/>
        <end position="78"/>
    </location>
</feature>
<feature type="strand" evidence="7">
    <location>
        <begin position="79"/>
        <end position="81"/>
    </location>
</feature>
<feature type="strand" evidence="7">
    <location>
        <begin position="86"/>
        <end position="92"/>
    </location>
</feature>
<feature type="strand" evidence="7">
    <location>
        <begin position="103"/>
        <end position="108"/>
    </location>
</feature>
<feature type="strand" evidence="7">
    <location>
        <begin position="111"/>
        <end position="118"/>
    </location>
</feature>
<feature type="helix" evidence="7">
    <location>
        <begin position="119"/>
        <end position="121"/>
    </location>
</feature>
<feature type="strand" evidence="7">
    <location>
        <begin position="128"/>
        <end position="133"/>
    </location>
</feature>
<feature type="strand" evidence="7">
    <location>
        <begin position="141"/>
        <end position="146"/>
    </location>
</feature>
<feature type="helix" evidence="7">
    <location>
        <begin position="148"/>
        <end position="150"/>
    </location>
</feature>
<feature type="strand" evidence="7">
    <location>
        <begin position="151"/>
        <end position="153"/>
    </location>
</feature>
<feature type="strand" evidence="7">
    <location>
        <begin position="158"/>
        <end position="163"/>
    </location>
</feature>
<feature type="strand" evidence="7">
    <location>
        <begin position="165"/>
        <end position="168"/>
    </location>
</feature>
<feature type="strand" evidence="7">
    <location>
        <begin position="170"/>
        <end position="175"/>
    </location>
</feature>
<feature type="strand" evidence="7">
    <location>
        <begin position="177"/>
        <end position="179"/>
    </location>
</feature>
<feature type="turn" evidence="7">
    <location>
        <begin position="181"/>
        <end position="183"/>
    </location>
</feature>
<feature type="strand" evidence="7">
    <location>
        <begin position="185"/>
        <end position="191"/>
    </location>
</feature>
<feature type="strand" evidence="7">
    <location>
        <begin position="199"/>
        <end position="206"/>
    </location>
</feature>
<feature type="strand" evidence="7">
    <location>
        <begin position="208"/>
        <end position="211"/>
    </location>
</feature>
<feature type="strand" evidence="7">
    <location>
        <begin position="216"/>
        <end position="218"/>
    </location>
</feature>
<feature type="strand" evidence="7">
    <location>
        <begin position="220"/>
        <end position="227"/>
    </location>
</feature>
<feature type="strand" evidence="7">
    <location>
        <begin position="230"/>
        <end position="232"/>
    </location>
</feature>
<feature type="strand" evidence="7">
    <location>
        <begin position="245"/>
        <end position="247"/>
    </location>
</feature>
<feature type="turn" evidence="8">
    <location>
        <begin position="257"/>
        <end position="260"/>
    </location>
</feature>
<feature type="helix" evidence="8">
    <location>
        <begin position="262"/>
        <end position="265"/>
    </location>
</feature>
<feature type="helix" evidence="8">
    <location>
        <begin position="267"/>
        <end position="284"/>
    </location>
</feature>
<keyword id="KW-0002">3D-structure</keyword>
<keyword id="KW-1003">Cell membrane</keyword>
<keyword id="KW-1015">Disulfide bond</keyword>
<keyword id="KW-0325">Glycoprotein</keyword>
<keyword id="KW-0472">Membrane</keyword>
<keyword id="KW-0675">Receptor</keyword>
<keyword id="KW-1185">Reference proteome</keyword>
<keyword id="KW-0732">Signal</keyword>
<keyword id="KW-0812">Transmembrane</keyword>
<keyword id="KW-1133">Transmembrane helix</keyword>
<name>IL2RG_MOUSE</name>
<reference key="1">
    <citation type="journal article" date="1993" name="Biochem. Biophys. Res. Commun.">
        <title>Cloning of the mouse interleukin 2 receptor gamma chain: demonstration of functional differences between the mouse and human receptors.</title>
        <authorList>
            <person name="Kumaki S."/>
            <person name="Kondo M."/>
            <person name="Takeshita T."/>
            <person name="Asao H."/>
            <person name="Nakamura M."/>
            <person name="Sugamura K."/>
        </authorList>
    </citation>
    <scope>NUCLEOTIDE SEQUENCE [MRNA]</scope>
</reference>
<reference key="2">
    <citation type="journal article" date="1993" name="Proc. Natl. Acad. Sci. U.S.A.">
        <title>Characterization of cDNAs encoding the murine interleukin 2 receptor (IL-2R) gamma chain: chromosomal mapping and tissue specificity of IL-2R gamma chain expression.</title>
        <authorList>
            <person name="Cao X."/>
            <person name="Kozak C.A."/>
            <person name="Liu Y.J."/>
            <person name="Noguchi M."/>
            <person name="O'Connell E."/>
            <person name="Leonard W.J."/>
        </authorList>
    </citation>
    <scope>NUCLEOTIDE SEQUENCE [MRNA]</scope>
    <source>
        <strain>CBA/CaJ</strain>
    </source>
</reference>
<reference key="3">
    <citation type="journal article" date="1993" name="Gene">
        <title>Cloning and sequencing of the cDNA encoding a mouse IL-2 receptor gamma.</title>
        <authorList>
            <person name="Kobayashi N."/>
            <person name="Nakagawa S."/>
            <person name="Minami Y."/>
            <person name="Taniguchi T."/>
            <person name="Kono T."/>
        </authorList>
    </citation>
    <scope>NUCLEOTIDE SEQUENCE [MRNA]</scope>
</reference>
<reference key="4">
    <citation type="journal article" date="1994" name="Eur. J. Immunol.">
        <title>The murine interleukin-2 receptor gamma chain gene: organization, chromosomal localization and expression in the adult thymus.</title>
        <authorList>
            <person name="Disanto J.P."/>
            <person name="Certain S."/>
            <person name="Wilson A."/>
            <person name="Macdonald H.R."/>
            <person name="Avner P."/>
            <person name="Fischer A."/>
            <person name="de Saint Basile G."/>
        </authorList>
    </citation>
    <scope>NUCLEOTIDE SEQUENCE [GENOMIC DNA]</scope>
</reference>
<reference key="5">
    <citation type="journal article" date="1995" name="J. Neurooncol.">
        <title>Molecular mechanisms regulating the hyaluronan binding activity of the adhesion protein CD44.</title>
        <authorList>
            <person name="Chiu R.K."/>
            <person name="Droll A."/>
            <person name="Cooper D.L."/>
            <person name="Dougherty S.T."/>
            <person name="Dirks J.F."/>
            <person name="Dougherty G.J."/>
        </authorList>
    </citation>
    <scope>NUCLEOTIDE SEQUENCE</scope>
    <source>
        <strain>B6.S</strain>
    </source>
</reference>
<reference key="6">
    <citation type="journal article" date="2004" name="Genome Res.">
        <title>The status, quality, and expansion of the NIH full-length cDNA project: the Mammalian Gene Collection (MGC).</title>
        <authorList>
            <consortium name="The MGC Project Team"/>
        </authorList>
    </citation>
    <scope>NUCLEOTIDE SEQUENCE [LARGE SCALE MRNA]</scope>
    <source>
        <strain>FVB/N</strain>
        <tissue>Salivary gland</tissue>
    </source>
</reference>
<reference key="7">
    <citation type="journal article" date="1995" name="Int. Immunol.">
        <title>Sharing of the IL-2 receptor gamma chain with the functional IL-9 receptor complex.</title>
        <authorList>
            <person name="Kimura Y."/>
            <person name="Takeshita T."/>
            <person name="Kondo M."/>
            <person name="Ishii N."/>
            <person name="Nakamura M."/>
            <person name="Van Snick J."/>
            <person name="Sugamura K."/>
        </authorList>
    </citation>
    <scope>FUNCTION</scope>
    <scope>INTERACTION WITH IL9</scope>
</reference>
<dbReference type="EMBL" id="D13821">
    <property type="protein sequence ID" value="BAA02974.1"/>
    <property type="molecule type" value="mRNA"/>
</dbReference>
<dbReference type="EMBL" id="U21795">
    <property type="protein sequence ID" value="AAA64279.1"/>
    <property type="molecule type" value="Genomic_DNA"/>
</dbReference>
<dbReference type="EMBL" id="D13565">
    <property type="protein sequence ID" value="BAA02760.1"/>
    <property type="molecule type" value="mRNA"/>
</dbReference>
<dbReference type="EMBL" id="L20048">
    <property type="protein sequence ID" value="AAA39286.1"/>
    <property type="molecule type" value="mRNA"/>
</dbReference>
<dbReference type="EMBL" id="S75852">
    <property type="protein sequence ID" value="AAB32904.1"/>
    <property type="molecule type" value="Genomic_DNA"/>
</dbReference>
<dbReference type="EMBL" id="S75844">
    <property type="protein sequence ID" value="AAB32904.1"/>
    <property type="status" value="JOINED"/>
    <property type="molecule type" value="Genomic_DNA"/>
</dbReference>
<dbReference type="EMBL" id="S75845">
    <property type="protein sequence ID" value="AAB32904.1"/>
    <property type="status" value="JOINED"/>
    <property type="molecule type" value="Genomic_DNA"/>
</dbReference>
<dbReference type="EMBL" id="S75847">
    <property type="protein sequence ID" value="AAB32904.1"/>
    <property type="status" value="JOINED"/>
    <property type="molecule type" value="Genomic_DNA"/>
</dbReference>
<dbReference type="EMBL" id="S75848">
    <property type="protein sequence ID" value="AAB32904.1"/>
    <property type="status" value="JOINED"/>
    <property type="molecule type" value="Genomic_DNA"/>
</dbReference>
<dbReference type="EMBL" id="S75849">
    <property type="protein sequence ID" value="AAB32904.1"/>
    <property type="status" value="JOINED"/>
    <property type="molecule type" value="Genomic_DNA"/>
</dbReference>
<dbReference type="EMBL" id="S75850">
    <property type="protein sequence ID" value="AAB32904.1"/>
    <property type="status" value="JOINED"/>
    <property type="molecule type" value="Genomic_DNA"/>
</dbReference>
<dbReference type="EMBL" id="S75851">
    <property type="protein sequence ID" value="AAB32904.1"/>
    <property type="status" value="JOINED"/>
    <property type="molecule type" value="Genomic_DNA"/>
</dbReference>
<dbReference type="EMBL" id="X75337">
    <property type="protein sequence ID" value="CAA53085.1"/>
    <property type="molecule type" value="mRNA"/>
</dbReference>
<dbReference type="EMBL" id="BC014720">
    <property type="protein sequence ID" value="AAH14720.1"/>
    <property type="molecule type" value="mRNA"/>
</dbReference>
<dbReference type="CCDS" id="CCDS30312.1"/>
<dbReference type="PIR" id="I49280">
    <property type="entry name" value="I49280"/>
</dbReference>
<dbReference type="RefSeq" id="NP_038591.1">
    <property type="nucleotide sequence ID" value="NM_013563.4"/>
</dbReference>
<dbReference type="PDB" id="6DG5">
    <property type="method" value="X-ray"/>
    <property type="resolution" value="2.52 A"/>
    <property type="chains" value="C=56-254"/>
</dbReference>
<dbReference type="PDB" id="8DDC">
    <property type="method" value="NMR"/>
    <property type="chains" value="A=253-286"/>
</dbReference>
<dbReference type="PDB" id="8DDD">
    <property type="method" value="NMR"/>
    <property type="chains" value="A=253-286"/>
</dbReference>
<dbReference type="PDBsum" id="6DG5"/>
<dbReference type="PDBsum" id="8DDC"/>
<dbReference type="PDBsum" id="8DDD"/>
<dbReference type="SMR" id="P34902"/>
<dbReference type="BioGRID" id="200634">
    <property type="interactions" value="1"/>
</dbReference>
<dbReference type="CORUM" id="P34902"/>
<dbReference type="FunCoup" id="P34902">
    <property type="interactions" value="1015"/>
</dbReference>
<dbReference type="IntAct" id="P34902">
    <property type="interactions" value="3"/>
</dbReference>
<dbReference type="STRING" id="10090.ENSMUSP00000033664"/>
<dbReference type="GlyCosmos" id="P34902">
    <property type="glycosylation" value="6 sites, No reported glycans"/>
</dbReference>
<dbReference type="GlyGen" id="P34902">
    <property type="glycosylation" value="6 sites"/>
</dbReference>
<dbReference type="iPTMnet" id="P34902"/>
<dbReference type="PhosphoSitePlus" id="P34902"/>
<dbReference type="SwissPalm" id="P34902"/>
<dbReference type="PaxDb" id="10090-ENSMUSP00000033664"/>
<dbReference type="ProteomicsDB" id="267323"/>
<dbReference type="DNASU" id="16186"/>
<dbReference type="Ensembl" id="ENSMUST00000033664.14">
    <property type="protein sequence ID" value="ENSMUSP00000033664.8"/>
    <property type="gene ID" value="ENSMUSG00000031304.19"/>
</dbReference>
<dbReference type="GeneID" id="16186"/>
<dbReference type="KEGG" id="mmu:16186"/>
<dbReference type="UCSC" id="uc009txc.1">
    <property type="organism name" value="mouse"/>
</dbReference>
<dbReference type="AGR" id="MGI:96551"/>
<dbReference type="CTD" id="3561"/>
<dbReference type="MGI" id="MGI:96551">
    <property type="gene designation" value="Il2rg"/>
</dbReference>
<dbReference type="VEuPathDB" id="HostDB:ENSMUSG00000031304"/>
<dbReference type="eggNOG" id="ENOG502S289">
    <property type="taxonomic scope" value="Eukaryota"/>
</dbReference>
<dbReference type="GeneTree" id="ENSGT00510000048979"/>
<dbReference type="HOGENOM" id="CLU_060544_1_0_1"/>
<dbReference type="InParanoid" id="P34902"/>
<dbReference type="OMA" id="TAGCWLQ"/>
<dbReference type="OrthoDB" id="8942047at2759"/>
<dbReference type="PhylomeDB" id="P34902"/>
<dbReference type="TreeFam" id="TF333657"/>
<dbReference type="Reactome" id="R-MMU-1266695">
    <property type="pathway name" value="Interleukin-7 signaling"/>
</dbReference>
<dbReference type="Reactome" id="R-MMU-5673001">
    <property type="pathway name" value="RAF/MAP kinase cascade"/>
</dbReference>
<dbReference type="Reactome" id="R-MMU-6785807">
    <property type="pathway name" value="Interleukin-4 and Interleukin-13 signaling"/>
</dbReference>
<dbReference type="Reactome" id="R-MMU-8983432">
    <property type="pathway name" value="Interleukin-15 signaling"/>
</dbReference>
<dbReference type="Reactome" id="R-MMU-8985947">
    <property type="pathway name" value="Interleukin-9 signaling"/>
</dbReference>
<dbReference type="Reactome" id="R-MMU-9020558">
    <property type="pathway name" value="Interleukin-2 signaling"/>
</dbReference>
<dbReference type="Reactome" id="R-MMU-9020958">
    <property type="pathway name" value="Interleukin-21 signaling"/>
</dbReference>
<dbReference type="Reactome" id="R-MMU-912526">
    <property type="pathway name" value="Interleukin receptor SHC signaling"/>
</dbReference>
<dbReference type="BioGRID-ORCS" id="16186">
    <property type="hits" value="4 hits in 78 CRISPR screens"/>
</dbReference>
<dbReference type="ChiTaRS" id="Il2rg">
    <property type="organism name" value="mouse"/>
</dbReference>
<dbReference type="PRO" id="PR:P34902"/>
<dbReference type="Proteomes" id="UP000000589">
    <property type="component" value="Chromosome X"/>
</dbReference>
<dbReference type="RNAct" id="P34902">
    <property type="molecule type" value="protein"/>
</dbReference>
<dbReference type="Bgee" id="ENSMUSG00000031304">
    <property type="expression patterns" value="Expressed in mesenteric lymph node and 117 other cell types or tissues"/>
</dbReference>
<dbReference type="ExpressionAtlas" id="P34902">
    <property type="expression patterns" value="baseline and differential"/>
</dbReference>
<dbReference type="GO" id="GO:0009986">
    <property type="term" value="C:cell surface"/>
    <property type="evidence" value="ECO:0000250"/>
    <property type="project" value="UniProtKB"/>
</dbReference>
<dbReference type="GO" id="GO:0009897">
    <property type="term" value="C:external side of plasma membrane"/>
    <property type="evidence" value="ECO:0000314"/>
    <property type="project" value="MGI"/>
</dbReference>
<dbReference type="GO" id="GO:0005654">
    <property type="term" value="C:nucleoplasm"/>
    <property type="evidence" value="ECO:0007669"/>
    <property type="project" value="Ensembl"/>
</dbReference>
<dbReference type="GO" id="GO:0005886">
    <property type="term" value="C:plasma membrane"/>
    <property type="evidence" value="ECO:0000304"/>
    <property type="project" value="Reactome"/>
</dbReference>
<dbReference type="GO" id="GO:0015026">
    <property type="term" value="F:coreceptor activity"/>
    <property type="evidence" value="ECO:0007669"/>
    <property type="project" value="Ensembl"/>
</dbReference>
<dbReference type="GO" id="GO:0042010">
    <property type="term" value="F:interleukin-15 receptor activity"/>
    <property type="evidence" value="ECO:0000250"/>
    <property type="project" value="UniProtKB"/>
</dbReference>
<dbReference type="GO" id="GO:0019976">
    <property type="term" value="F:interleukin-2 binding"/>
    <property type="evidence" value="ECO:0000353"/>
    <property type="project" value="MGI"/>
</dbReference>
<dbReference type="GO" id="GO:0030183">
    <property type="term" value="P:B cell differentiation"/>
    <property type="evidence" value="ECO:0000315"/>
    <property type="project" value="MGI"/>
</dbReference>
<dbReference type="GO" id="GO:0002361">
    <property type="term" value="P:CD4-positive, CD25-positive, alpha-beta regulatory T cell differentiation"/>
    <property type="evidence" value="ECO:0000315"/>
    <property type="project" value="MGI"/>
</dbReference>
<dbReference type="GO" id="GO:0019725">
    <property type="term" value="P:cellular homeostasis"/>
    <property type="evidence" value="ECO:0007669"/>
    <property type="project" value="Ensembl"/>
</dbReference>
<dbReference type="GO" id="GO:0010467">
    <property type="term" value="P:gene expression"/>
    <property type="evidence" value="ECO:0000315"/>
    <property type="project" value="MGI"/>
</dbReference>
<dbReference type="GO" id="GO:0035723">
    <property type="term" value="P:interleukin-15-mediated signaling pathway"/>
    <property type="evidence" value="ECO:0000250"/>
    <property type="project" value="UniProtKB"/>
</dbReference>
<dbReference type="GO" id="GO:0038110">
    <property type="term" value="P:interleukin-2-mediated signaling pathway"/>
    <property type="evidence" value="ECO:0007669"/>
    <property type="project" value="Ensembl"/>
</dbReference>
<dbReference type="GO" id="GO:0038111">
    <property type="term" value="P:interleukin-7-mediated signaling pathway"/>
    <property type="evidence" value="ECO:0007669"/>
    <property type="project" value="Ensembl"/>
</dbReference>
<dbReference type="GO" id="GO:0038113">
    <property type="term" value="P:interleukin-9-mediated signaling pathway"/>
    <property type="evidence" value="ECO:0007669"/>
    <property type="project" value="Ensembl"/>
</dbReference>
<dbReference type="GO" id="GO:0030098">
    <property type="term" value="P:lymphocyte differentiation"/>
    <property type="evidence" value="ECO:0000315"/>
    <property type="project" value="MGI"/>
</dbReference>
<dbReference type="GO" id="GO:0002335">
    <property type="term" value="P:mature B cell differentiation"/>
    <property type="evidence" value="ECO:0000315"/>
    <property type="project" value="MGI"/>
</dbReference>
<dbReference type="GO" id="GO:0045579">
    <property type="term" value="P:positive regulation of B cell differentiation"/>
    <property type="evidence" value="ECO:0000315"/>
    <property type="project" value="MGI"/>
</dbReference>
<dbReference type="GO" id="GO:0032831">
    <property type="term" value="P:positive regulation of CD4-positive, CD25-positive, alpha-beta regulatory T cell differentiation"/>
    <property type="evidence" value="ECO:0000315"/>
    <property type="project" value="MGI"/>
</dbReference>
<dbReference type="GO" id="GO:0010628">
    <property type="term" value="P:positive regulation of gene expression"/>
    <property type="evidence" value="ECO:0000315"/>
    <property type="project" value="MGI"/>
</dbReference>
<dbReference type="GO" id="GO:0050766">
    <property type="term" value="P:positive regulation of phagocytosis"/>
    <property type="evidence" value="ECO:0000250"/>
    <property type="project" value="UniProtKB"/>
</dbReference>
<dbReference type="GO" id="GO:0033089">
    <property type="term" value="P:positive regulation of T cell differentiation in thymus"/>
    <property type="evidence" value="ECO:0000315"/>
    <property type="project" value="MGI"/>
</dbReference>
<dbReference type="GO" id="GO:0010468">
    <property type="term" value="P:regulation of gene expression"/>
    <property type="evidence" value="ECO:0000315"/>
    <property type="project" value="MGI"/>
</dbReference>
<dbReference type="GO" id="GO:0033077">
    <property type="term" value="P:T cell differentiation in thymus"/>
    <property type="evidence" value="ECO:0000315"/>
    <property type="project" value="MGI"/>
</dbReference>
<dbReference type="CDD" id="cd00063">
    <property type="entry name" value="FN3"/>
    <property type="match status" value="1"/>
</dbReference>
<dbReference type="FunFam" id="2.60.40.10:FF:000754">
    <property type="entry name" value="Cytokine receptor common subunit gamma"/>
    <property type="match status" value="1"/>
</dbReference>
<dbReference type="FunFam" id="2.60.40.10:FF:001183">
    <property type="entry name" value="Cytokine receptor common subunit gamma"/>
    <property type="match status" value="1"/>
</dbReference>
<dbReference type="Gene3D" id="2.60.40.10">
    <property type="entry name" value="Immunoglobulins"/>
    <property type="match status" value="2"/>
</dbReference>
<dbReference type="InterPro" id="IPR048648">
    <property type="entry name" value="CRLF2-like_D2"/>
</dbReference>
<dbReference type="InterPro" id="IPR003961">
    <property type="entry name" value="FN3_dom"/>
</dbReference>
<dbReference type="InterPro" id="IPR036116">
    <property type="entry name" value="FN3_sf"/>
</dbReference>
<dbReference type="InterPro" id="IPR003531">
    <property type="entry name" value="Hempt_rcpt_S_F1_CS"/>
</dbReference>
<dbReference type="InterPro" id="IPR013783">
    <property type="entry name" value="Ig-like_fold"/>
</dbReference>
<dbReference type="InterPro" id="IPR053856">
    <property type="entry name" value="TSLPR_D1"/>
</dbReference>
<dbReference type="PANTHER" id="PTHR23037">
    <property type="entry name" value="CYTOKINE RECEPTOR"/>
    <property type="match status" value="1"/>
</dbReference>
<dbReference type="PANTHER" id="PTHR23037:SF47">
    <property type="entry name" value="INTERLEUKIN 2 RECEPTOR SUBUNIT GAMMA"/>
    <property type="match status" value="1"/>
</dbReference>
<dbReference type="Pfam" id="PF21605">
    <property type="entry name" value="CRLF2-like_D2"/>
    <property type="match status" value="1"/>
</dbReference>
<dbReference type="Pfam" id="PF22012">
    <property type="entry name" value="TSLPR_D1"/>
    <property type="match status" value="1"/>
</dbReference>
<dbReference type="SMART" id="SM00060">
    <property type="entry name" value="FN3"/>
    <property type="match status" value="1"/>
</dbReference>
<dbReference type="SUPFAM" id="SSF49265">
    <property type="entry name" value="Fibronectin type III"/>
    <property type="match status" value="2"/>
</dbReference>
<dbReference type="PROSITE" id="PS50853">
    <property type="entry name" value="FN3"/>
    <property type="match status" value="1"/>
</dbReference>
<dbReference type="PROSITE" id="PS01355">
    <property type="entry name" value="HEMATOPO_REC_S_F1"/>
    <property type="match status" value="1"/>
</dbReference>
<organism>
    <name type="scientific">Mus musculus</name>
    <name type="common">Mouse</name>
    <dbReference type="NCBI Taxonomy" id="10090"/>
    <lineage>
        <taxon>Eukaryota</taxon>
        <taxon>Metazoa</taxon>
        <taxon>Chordata</taxon>
        <taxon>Craniata</taxon>
        <taxon>Vertebrata</taxon>
        <taxon>Euteleostomi</taxon>
        <taxon>Mammalia</taxon>
        <taxon>Eutheria</taxon>
        <taxon>Euarchontoglires</taxon>
        <taxon>Glires</taxon>
        <taxon>Rodentia</taxon>
        <taxon>Myomorpha</taxon>
        <taxon>Muroidea</taxon>
        <taxon>Muridae</taxon>
        <taxon>Murinae</taxon>
        <taxon>Mus</taxon>
        <taxon>Mus</taxon>
    </lineage>
</organism>
<proteinExistence type="evidence at protein level"/>
<accession>P34902</accession>
<protein>
    <recommendedName>
        <fullName>Cytokine receptor common subunit gamma</fullName>
    </recommendedName>
    <alternativeName>
        <fullName>Interleukin-2 receptor subunit gamma</fullName>
        <shortName>IL-2 receptor subunit gamma</shortName>
        <shortName>IL-2R subunit gamma</shortName>
        <shortName>IL-2RG</shortName>
    </alternativeName>
    <alternativeName>
        <fullName>gammaC</fullName>
    </alternativeName>
    <alternativeName>
        <fullName>p64</fullName>
    </alternativeName>
    <cdAntigenName>CD132</cdAntigenName>
</protein>
<sequence length="369" mass="42241">MLKLLLSPRSFLVLQLLLLRAGWSSKVLMSSANEDIKADLILTSTAPEHLSAPTLPLPEVQCFVFNIEYMNCTWNSSSEPQATNLTLHYRYKVSDNNTFQECSHYLFSKEITSGCQIQKEDIQLYQTFVVQLQDPQKPQRRAVQKLNLQNLVIPRAPENLTLSNLSESQLELRWKSRHIKERCLQYLVQYRSNRDRSWTELIVNHEPRFSLPSVDELKRYTFRVRSRYNPICGSSQQWSKWSQPVHWGSHTVEENPSLFALEAVLIPVGTMGLIITLIFVYCWLERMPPIPPIKNLEDLVTEYQGNFSAWSGVSKGLTESLQPDYSERFCHVSEIPPKGGALGEGPGGSPCSLHSPYWPPPCYSLKPEA</sequence>